<dbReference type="EMBL" id="AE008923">
    <property type="protein sequence ID" value="AAM37379.1"/>
    <property type="molecule type" value="Genomic_DNA"/>
</dbReference>
<dbReference type="RefSeq" id="WP_011051650.1">
    <property type="nucleotide sequence ID" value="NC_003919.1"/>
</dbReference>
<dbReference type="SMR" id="Q8PJK3"/>
<dbReference type="KEGG" id="xac:XAC2528"/>
<dbReference type="eggNOG" id="COG0326">
    <property type="taxonomic scope" value="Bacteria"/>
</dbReference>
<dbReference type="HOGENOM" id="CLU_006684_3_0_6"/>
<dbReference type="Proteomes" id="UP000000576">
    <property type="component" value="Chromosome"/>
</dbReference>
<dbReference type="GO" id="GO:0005737">
    <property type="term" value="C:cytoplasm"/>
    <property type="evidence" value="ECO:0007669"/>
    <property type="project" value="UniProtKB-SubCell"/>
</dbReference>
<dbReference type="GO" id="GO:0005524">
    <property type="term" value="F:ATP binding"/>
    <property type="evidence" value="ECO:0007669"/>
    <property type="project" value="UniProtKB-UniRule"/>
</dbReference>
<dbReference type="GO" id="GO:0016887">
    <property type="term" value="F:ATP hydrolysis activity"/>
    <property type="evidence" value="ECO:0007669"/>
    <property type="project" value="InterPro"/>
</dbReference>
<dbReference type="GO" id="GO:0140662">
    <property type="term" value="F:ATP-dependent protein folding chaperone"/>
    <property type="evidence" value="ECO:0007669"/>
    <property type="project" value="InterPro"/>
</dbReference>
<dbReference type="GO" id="GO:0051082">
    <property type="term" value="F:unfolded protein binding"/>
    <property type="evidence" value="ECO:0007669"/>
    <property type="project" value="UniProtKB-UniRule"/>
</dbReference>
<dbReference type="CDD" id="cd16927">
    <property type="entry name" value="HATPase_Hsp90-like"/>
    <property type="match status" value="1"/>
</dbReference>
<dbReference type="FunFam" id="1.20.120.790:FF:000008">
    <property type="entry name" value="Chaperone protein HtpG"/>
    <property type="match status" value="1"/>
</dbReference>
<dbReference type="FunFam" id="3.30.230.80:FF:000002">
    <property type="entry name" value="Molecular chaperone HtpG"/>
    <property type="match status" value="1"/>
</dbReference>
<dbReference type="FunFam" id="3.30.565.10:FF:000009">
    <property type="entry name" value="Molecular chaperone HtpG"/>
    <property type="match status" value="1"/>
</dbReference>
<dbReference type="Gene3D" id="3.30.230.80">
    <property type="match status" value="1"/>
</dbReference>
<dbReference type="Gene3D" id="3.40.50.11260">
    <property type="match status" value="1"/>
</dbReference>
<dbReference type="Gene3D" id="1.20.120.790">
    <property type="entry name" value="Heat shock protein 90, C-terminal domain"/>
    <property type="match status" value="1"/>
</dbReference>
<dbReference type="Gene3D" id="3.30.565.10">
    <property type="entry name" value="Histidine kinase-like ATPase, C-terminal domain"/>
    <property type="match status" value="1"/>
</dbReference>
<dbReference type="HAMAP" id="MF_00505">
    <property type="entry name" value="HSP90"/>
    <property type="match status" value="1"/>
</dbReference>
<dbReference type="InterPro" id="IPR036890">
    <property type="entry name" value="HATPase_C_sf"/>
</dbReference>
<dbReference type="InterPro" id="IPR019805">
    <property type="entry name" value="Heat_shock_protein_90_CS"/>
</dbReference>
<dbReference type="InterPro" id="IPR037196">
    <property type="entry name" value="HSP90_C"/>
</dbReference>
<dbReference type="InterPro" id="IPR001404">
    <property type="entry name" value="Hsp90_fam"/>
</dbReference>
<dbReference type="InterPro" id="IPR020575">
    <property type="entry name" value="Hsp90_N"/>
</dbReference>
<dbReference type="InterPro" id="IPR020568">
    <property type="entry name" value="Ribosomal_Su5_D2-typ_SF"/>
</dbReference>
<dbReference type="NCBIfam" id="NF003555">
    <property type="entry name" value="PRK05218.1"/>
    <property type="match status" value="1"/>
</dbReference>
<dbReference type="PANTHER" id="PTHR11528">
    <property type="entry name" value="HEAT SHOCK PROTEIN 90 FAMILY MEMBER"/>
    <property type="match status" value="1"/>
</dbReference>
<dbReference type="Pfam" id="PF13589">
    <property type="entry name" value="HATPase_c_3"/>
    <property type="match status" value="1"/>
</dbReference>
<dbReference type="Pfam" id="PF00183">
    <property type="entry name" value="HSP90"/>
    <property type="match status" value="1"/>
</dbReference>
<dbReference type="PIRSF" id="PIRSF002583">
    <property type="entry name" value="Hsp90"/>
    <property type="match status" value="1"/>
</dbReference>
<dbReference type="PRINTS" id="PR00775">
    <property type="entry name" value="HEATSHOCK90"/>
</dbReference>
<dbReference type="SMART" id="SM00387">
    <property type="entry name" value="HATPase_c"/>
    <property type="match status" value="1"/>
</dbReference>
<dbReference type="SUPFAM" id="SSF55874">
    <property type="entry name" value="ATPase domain of HSP90 chaperone/DNA topoisomerase II/histidine kinase"/>
    <property type="match status" value="1"/>
</dbReference>
<dbReference type="SUPFAM" id="SSF110942">
    <property type="entry name" value="HSP90 C-terminal domain"/>
    <property type="match status" value="1"/>
</dbReference>
<dbReference type="SUPFAM" id="SSF54211">
    <property type="entry name" value="Ribosomal protein S5 domain 2-like"/>
    <property type="match status" value="1"/>
</dbReference>
<dbReference type="PROSITE" id="PS00298">
    <property type="entry name" value="HSP90"/>
    <property type="match status" value="1"/>
</dbReference>
<sequence length="634" mass="70782">MTVETDKQTLGFQTEVKQLLQLMIHSLYSNKEIFLRELVSNAADAADKLRFEALVKPELLEGSGELRIRVDYDKDARTVTIDDNGIGMSREDAVSHLGTIAKSGTADFLKHLSGDQKKDANLIGQFGVGFYSAFIVADQVDVYSRRAGLPASEGVHWSSRGEGEFEIASVDKPERGTRIVLHLKEGEESFADGWTLRGILKKYSDHIGLPIEMRKEHYGEAADKPAEPEWEAVNRASALWTRPKSEIKDEEYQEFYKHVAHDAGNPLAWSHNKVEGKLEYTSLLFVPGRAPFDLYHRDSAKGLKLYVQRVFIMDQAEQFLPLYLRFIKGVVDSSDLSLNVSREILQSGPVVDSMKSALTKRSLDMLEKLAKDKPDDYATFWRNFGQALKEGPAEDYANREKIAGLLRFSSTHDTTGAQSVGLADYVGRLADGQDKLYYLTGESYAQIKDSPHLEVFRKKGIEVLLLTDRIDEWLMSYLTEFDGKSFVDVARGDLDLGKLDSEEDKKAQEEVAKSKEGLASRIKAALGDDVAELRVSHRLTDSPAILAIGQGDLGLQMRQLLEASGQAVPESKPVFEFNPTHPLIEKLDAEQDMDRFGDLSRVLFDQAALAAGDSLKDPAAYVRRLNKLLLELSA</sequence>
<keyword id="KW-0067">ATP-binding</keyword>
<keyword id="KW-0143">Chaperone</keyword>
<keyword id="KW-0963">Cytoplasm</keyword>
<keyword id="KW-0547">Nucleotide-binding</keyword>
<keyword id="KW-0346">Stress response</keyword>
<gene>
    <name evidence="1" type="primary">htpG</name>
    <name type="ordered locus">XAC2528</name>
</gene>
<evidence type="ECO:0000255" key="1">
    <source>
        <dbReference type="HAMAP-Rule" id="MF_00505"/>
    </source>
</evidence>
<protein>
    <recommendedName>
        <fullName evidence="1">Chaperone protein HtpG</fullName>
    </recommendedName>
    <alternativeName>
        <fullName evidence="1">Heat shock protein HtpG</fullName>
    </alternativeName>
    <alternativeName>
        <fullName evidence="1">High temperature protein G</fullName>
    </alternativeName>
</protein>
<organism>
    <name type="scientific">Xanthomonas axonopodis pv. citri (strain 306)</name>
    <dbReference type="NCBI Taxonomy" id="190486"/>
    <lineage>
        <taxon>Bacteria</taxon>
        <taxon>Pseudomonadati</taxon>
        <taxon>Pseudomonadota</taxon>
        <taxon>Gammaproteobacteria</taxon>
        <taxon>Lysobacterales</taxon>
        <taxon>Lysobacteraceae</taxon>
        <taxon>Xanthomonas</taxon>
    </lineage>
</organism>
<name>HTPG_XANAC</name>
<reference key="1">
    <citation type="journal article" date="2002" name="Nature">
        <title>Comparison of the genomes of two Xanthomonas pathogens with differing host specificities.</title>
        <authorList>
            <person name="da Silva A.C.R."/>
            <person name="Ferro J.A."/>
            <person name="Reinach F.C."/>
            <person name="Farah C.S."/>
            <person name="Furlan L.R."/>
            <person name="Quaggio R.B."/>
            <person name="Monteiro-Vitorello C.B."/>
            <person name="Van Sluys M.A."/>
            <person name="Almeida N.F. Jr."/>
            <person name="Alves L.M.C."/>
            <person name="do Amaral A.M."/>
            <person name="Bertolini M.C."/>
            <person name="Camargo L.E.A."/>
            <person name="Camarotte G."/>
            <person name="Cannavan F."/>
            <person name="Cardozo J."/>
            <person name="Chambergo F."/>
            <person name="Ciapina L.P."/>
            <person name="Cicarelli R.M.B."/>
            <person name="Coutinho L.L."/>
            <person name="Cursino-Santos J.R."/>
            <person name="El-Dorry H."/>
            <person name="Faria J.B."/>
            <person name="Ferreira A.J.S."/>
            <person name="Ferreira R.C.C."/>
            <person name="Ferro M.I.T."/>
            <person name="Formighieri E.F."/>
            <person name="Franco M.C."/>
            <person name="Greggio C.C."/>
            <person name="Gruber A."/>
            <person name="Katsuyama A.M."/>
            <person name="Kishi L.T."/>
            <person name="Leite R.P."/>
            <person name="Lemos E.G.M."/>
            <person name="Lemos M.V.F."/>
            <person name="Locali E.C."/>
            <person name="Machado M.A."/>
            <person name="Madeira A.M.B.N."/>
            <person name="Martinez-Rossi N.M."/>
            <person name="Martins E.C."/>
            <person name="Meidanis J."/>
            <person name="Menck C.F.M."/>
            <person name="Miyaki C.Y."/>
            <person name="Moon D.H."/>
            <person name="Moreira L.M."/>
            <person name="Novo M.T.M."/>
            <person name="Okura V.K."/>
            <person name="Oliveira M.C."/>
            <person name="Oliveira V.R."/>
            <person name="Pereira H.A."/>
            <person name="Rossi A."/>
            <person name="Sena J.A.D."/>
            <person name="Silva C."/>
            <person name="de Souza R.F."/>
            <person name="Spinola L.A.F."/>
            <person name="Takita M.A."/>
            <person name="Tamura R.E."/>
            <person name="Teixeira E.C."/>
            <person name="Tezza R.I.D."/>
            <person name="Trindade dos Santos M."/>
            <person name="Truffi D."/>
            <person name="Tsai S.M."/>
            <person name="White F.F."/>
            <person name="Setubal J.C."/>
            <person name="Kitajima J.P."/>
        </authorList>
    </citation>
    <scope>NUCLEOTIDE SEQUENCE [LARGE SCALE GENOMIC DNA]</scope>
    <source>
        <strain>306</strain>
    </source>
</reference>
<proteinExistence type="inferred from homology"/>
<accession>Q8PJK3</accession>
<comment type="function">
    <text evidence="1">Molecular chaperone. Has ATPase activity.</text>
</comment>
<comment type="subunit">
    <text evidence="1">Homodimer.</text>
</comment>
<comment type="subcellular location">
    <subcellularLocation>
        <location evidence="1">Cytoplasm</location>
    </subcellularLocation>
</comment>
<comment type="similarity">
    <text evidence="1">Belongs to the heat shock protein 90 family.</text>
</comment>
<feature type="chain" id="PRO_0000063027" description="Chaperone protein HtpG">
    <location>
        <begin position="1"/>
        <end position="634"/>
    </location>
</feature>
<feature type="region of interest" description="A; substrate-binding" evidence="1">
    <location>
        <begin position="1"/>
        <end position="342"/>
    </location>
</feature>
<feature type="region of interest" description="B" evidence="1">
    <location>
        <begin position="343"/>
        <end position="559"/>
    </location>
</feature>
<feature type="region of interest" description="C" evidence="1">
    <location>
        <begin position="560"/>
        <end position="634"/>
    </location>
</feature>